<protein>
    <recommendedName>
        <fullName>Superoxide dismutase [Cu-Zn] 1</fullName>
        <ecNumber>1.15.1.1</ecNumber>
    </recommendedName>
</protein>
<proteinExistence type="evidence at transcript level"/>
<sequence>MVKAVVVLSSSEGVSGTVQFTQEGSGPTTVTGNVSGLRPGLHGFHVHALGDTTNGCMSTGPHFNPAGKEHGAPEDETRHAGDLGNITVGDDGTATFTIIDSQIPLTGPNSIVGRAVVVHADPDDLGRGGHELSKATGNAGGRVACGVIGLQG</sequence>
<evidence type="ECO:0000250" key="1"/>
<evidence type="ECO:0000305" key="2"/>
<comment type="function">
    <text>Destroys radicals which are normally produced within the cells and which are toxic to biological systems.</text>
</comment>
<comment type="catalytic activity">
    <reaction>
        <text>2 superoxide + 2 H(+) = H2O2 + O2</text>
        <dbReference type="Rhea" id="RHEA:20696"/>
        <dbReference type="ChEBI" id="CHEBI:15378"/>
        <dbReference type="ChEBI" id="CHEBI:15379"/>
        <dbReference type="ChEBI" id="CHEBI:16240"/>
        <dbReference type="ChEBI" id="CHEBI:18421"/>
        <dbReference type="EC" id="1.15.1.1"/>
    </reaction>
</comment>
<comment type="cofactor">
    <cofactor evidence="1">
        <name>Cu cation</name>
        <dbReference type="ChEBI" id="CHEBI:23378"/>
    </cofactor>
    <text evidence="1">Binds 1 copper ion per subunit.</text>
</comment>
<comment type="cofactor">
    <cofactor evidence="1">
        <name>Zn(2+)</name>
        <dbReference type="ChEBI" id="CHEBI:29105"/>
    </cofactor>
    <text evidence="1">Binds 1 zinc ion per subunit.</text>
</comment>
<comment type="subunit">
    <text evidence="1">Homodimer.</text>
</comment>
<comment type="subcellular location">
    <subcellularLocation>
        <location>Cytoplasm</location>
    </subcellularLocation>
</comment>
<comment type="similarity">
    <text evidence="2">Belongs to the Cu-Zn superoxide dismutase family.</text>
</comment>
<dbReference type="EC" id="1.15.1.1"/>
<dbReference type="EMBL" id="U80069">
    <property type="protein sequence ID" value="AAB40394.1"/>
    <property type="molecule type" value="mRNA"/>
</dbReference>
<dbReference type="SMR" id="P93258"/>
<dbReference type="GO" id="GO:0005737">
    <property type="term" value="C:cytoplasm"/>
    <property type="evidence" value="ECO:0007669"/>
    <property type="project" value="UniProtKB-SubCell"/>
</dbReference>
<dbReference type="GO" id="GO:0005507">
    <property type="term" value="F:copper ion binding"/>
    <property type="evidence" value="ECO:0007669"/>
    <property type="project" value="InterPro"/>
</dbReference>
<dbReference type="GO" id="GO:0004784">
    <property type="term" value="F:superoxide dismutase activity"/>
    <property type="evidence" value="ECO:0007669"/>
    <property type="project" value="UniProtKB-EC"/>
</dbReference>
<dbReference type="CDD" id="cd00305">
    <property type="entry name" value="Cu-Zn_Superoxide_Dismutase"/>
    <property type="match status" value="1"/>
</dbReference>
<dbReference type="FunFam" id="2.60.40.200:FF:000001">
    <property type="entry name" value="Superoxide dismutase [Cu-Zn]"/>
    <property type="match status" value="1"/>
</dbReference>
<dbReference type="Gene3D" id="2.60.40.200">
    <property type="entry name" value="Superoxide dismutase, copper/zinc binding domain"/>
    <property type="match status" value="1"/>
</dbReference>
<dbReference type="InterPro" id="IPR036423">
    <property type="entry name" value="SOD-like_Cu/Zn_dom_sf"/>
</dbReference>
<dbReference type="InterPro" id="IPR024134">
    <property type="entry name" value="SOD_Cu/Zn_/chaperone"/>
</dbReference>
<dbReference type="InterPro" id="IPR018152">
    <property type="entry name" value="SOD_Cu/Zn_BS"/>
</dbReference>
<dbReference type="InterPro" id="IPR001424">
    <property type="entry name" value="SOD_Cu_Zn_dom"/>
</dbReference>
<dbReference type="PANTHER" id="PTHR10003">
    <property type="entry name" value="SUPEROXIDE DISMUTASE CU-ZN -RELATED"/>
    <property type="match status" value="1"/>
</dbReference>
<dbReference type="Pfam" id="PF00080">
    <property type="entry name" value="Sod_Cu"/>
    <property type="match status" value="1"/>
</dbReference>
<dbReference type="PRINTS" id="PR00068">
    <property type="entry name" value="CUZNDISMTASE"/>
</dbReference>
<dbReference type="SUPFAM" id="SSF49329">
    <property type="entry name" value="Cu,Zn superoxide dismutase-like"/>
    <property type="match status" value="1"/>
</dbReference>
<dbReference type="PROSITE" id="PS00087">
    <property type="entry name" value="SOD_CU_ZN_1"/>
    <property type="match status" value="1"/>
</dbReference>
<dbReference type="PROSITE" id="PS00332">
    <property type="entry name" value="SOD_CU_ZN_2"/>
    <property type="match status" value="1"/>
</dbReference>
<feature type="chain" id="PRO_0000164144" description="Superoxide dismutase [Cu-Zn] 1">
    <location>
        <begin position="1"/>
        <end position="152"/>
    </location>
</feature>
<feature type="binding site" evidence="1">
    <location>
        <position position="45"/>
    </location>
    <ligand>
        <name>Cu cation</name>
        <dbReference type="ChEBI" id="CHEBI:23378"/>
        <note>catalytic</note>
    </ligand>
</feature>
<feature type="binding site" evidence="1">
    <location>
        <position position="47"/>
    </location>
    <ligand>
        <name>Cu cation</name>
        <dbReference type="ChEBI" id="CHEBI:23378"/>
        <note>catalytic</note>
    </ligand>
</feature>
<feature type="binding site" evidence="1">
    <location>
        <position position="62"/>
    </location>
    <ligand>
        <name>Cu cation</name>
        <dbReference type="ChEBI" id="CHEBI:23378"/>
        <note>catalytic</note>
    </ligand>
</feature>
<feature type="binding site" evidence="1">
    <location>
        <position position="62"/>
    </location>
    <ligand>
        <name>Zn(2+)</name>
        <dbReference type="ChEBI" id="CHEBI:29105"/>
        <note>structural</note>
    </ligand>
</feature>
<feature type="binding site" evidence="1">
    <location>
        <position position="70"/>
    </location>
    <ligand>
        <name>Zn(2+)</name>
        <dbReference type="ChEBI" id="CHEBI:29105"/>
        <note>structural</note>
    </ligand>
</feature>
<feature type="binding site" evidence="1">
    <location>
        <position position="79"/>
    </location>
    <ligand>
        <name>Zn(2+)</name>
        <dbReference type="ChEBI" id="CHEBI:29105"/>
        <note>structural</note>
    </ligand>
</feature>
<feature type="binding site" evidence="1">
    <location>
        <position position="82"/>
    </location>
    <ligand>
        <name>Zn(2+)</name>
        <dbReference type="ChEBI" id="CHEBI:29105"/>
        <note>structural</note>
    </ligand>
</feature>
<feature type="binding site" evidence="1">
    <location>
        <position position="119"/>
    </location>
    <ligand>
        <name>Cu cation</name>
        <dbReference type="ChEBI" id="CHEBI:23378"/>
        <note>catalytic</note>
    </ligand>
</feature>
<feature type="disulfide bond" evidence="1">
    <location>
        <begin position="56"/>
        <end position="145"/>
    </location>
</feature>
<reference key="1">
    <citation type="submission" date="1996-11" db="EMBL/GenBank/DDBJ databases">
        <authorList>
            <person name="Michalowski C.B."/>
            <person name="Quigley-Landreau F."/>
            <person name="Bohnert H.J."/>
        </authorList>
    </citation>
    <scope>NUCLEOTIDE SEQUENCE [MRNA]</scope>
</reference>
<name>SODC1_MESCR</name>
<gene>
    <name type="primary">SODCC.1</name>
    <name type="synonym">SOD</name>
    <name type="synonym">SOD1</name>
</gene>
<organism>
    <name type="scientific">Mesembryanthemum crystallinum</name>
    <name type="common">Common ice plant</name>
    <name type="synonym">Cryophytum crystallinum</name>
    <dbReference type="NCBI Taxonomy" id="3544"/>
    <lineage>
        <taxon>Eukaryota</taxon>
        <taxon>Viridiplantae</taxon>
        <taxon>Streptophyta</taxon>
        <taxon>Embryophyta</taxon>
        <taxon>Tracheophyta</taxon>
        <taxon>Spermatophyta</taxon>
        <taxon>Magnoliopsida</taxon>
        <taxon>eudicotyledons</taxon>
        <taxon>Gunneridae</taxon>
        <taxon>Pentapetalae</taxon>
        <taxon>Caryophyllales</taxon>
        <taxon>Aizoaceae</taxon>
        <taxon>Mesembryanthemum</taxon>
        <taxon>Mesembryanthemum subgen. Cryophytum</taxon>
    </lineage>
</organism>
<accession>P93258</accession>
<keyword id="KW-0049">Antioxidant</keyword>
<keyword id="KW-0186">Copper</keyword>
<keyword id="KW-0963">Cytoplasm</keyword>
<keyword id="KW-1015">Disulfide bond</keyword>
<keyword id="KW-0479">Metal-binding</keyword>
<keyword id="KW-0560">Oxidoreductase</keyword>
<keyword id="KW-0862">Zinc</keyword>